<protein>
    <recommendedName>
        <fullName evidence="1">Aspartyl/glutamyl-tRNA(Asn/Gln) amidotransferase subunit B</fullName>
        <shortName evidence="1">Asp/Glu-ADT subunit B</shortName>
        <ecNumber evidence="1">6.3.5.-</ecNumber>
    </recommendedName>
</protein>
<evidence type="ECO:0000255" key="1">
    <source>
        <dbReference type="HAMAP-Rule" id="MF_00121"/>
    </source>
</evidence>
<keyword id="KW-0067">ATP-binding</keyword>
<keyword id="KW-0436">Ligase</keyword>
<keyword id="KW-0547">Nucleotide-binding</keyword>
<keyword id="KW-0648">Protein biosynthesis</keyword>
<comment type="function">
    <text evidence="1">Allows the formation of correctly charged Asn-tRNA(Asn) or Gln-tRNA(Gln) through the transamidation of misacylated Asp-tRNA(Asn) or Glu-tRNA(Gln) in organisms which lack either or both of asparaginyl-tRNA or glutaminyl-tRNA synthetases. The reaction takes place in the presence of glutamine and ATP through an activated phospho-Asp-tRNA(Asn) or phospho-Glu-tRNA(Gln).</text>
</comment>
<comment type="catalytic activity">
    <reaction evidence="1">
        <text>L-glutamyl-tRNA(Gln) + L-glutamine + ATP + H2O = L-glutaminyl-tRNA(Gln) + L-glutamate + ADP + phosphate + H(+)</text>
        <dbReference type="Rhea" id="RHEA:17521"/>
        <dbReference type="Rhea" id="RHEA-COMP:9681"/>
        <dbReference type="Rhea" id="RHEA-COMP:9684"/>
        <dbReference type="ChEBI" id="CHEBI:15377"/>
        <dbReference type="ChEBI" id="CHEBI:15378"/>
        <dbReference type="ChEBI" id="CHEBI:29985"/>
        <dbReference type="ChEBI" id="CHEBI:30616"/>
        <dbReference type="ChEBI" id="CHEBI:43474"/>
        <dbReference type="ChEBI" id="CHEBI:58359"/>
        <dbReference type="ChEBI" id="CHEBI:78520"/>
        <dbReference type="ChEBI" id="CHEBI:78521"/>
        <dbReference type="ChEBI" id="CHEBI:456216"/>
    </reaction>
</comment>
<comment type="catalytic activity">
    <reaction evidence="1">
        <text>L-aspartyl-tRNA(Asn) + L-glutamine + ATP + H2O = L-asparaginyl-tRNA(Asn) + L-glutamate + ADP + phosphate + 2 H(+)</text>
        <dbReference type="Rhea" id="RHEA:14513"/>
        <dbReference type="Rhea" id="RHEA-COMP:9674"/>
        <dbReference type="Rhea" id="RHEA-COMP:9677"/>
        <dbReference type="ChEBI" id="CHEBI:15377"/>
        <dbReference type="ChEBI" id="CHEBI:15378"/>
        <dbReference type="ChEBI" id="CHEBI:29985"/>
        <dbReference type="ChEBI" id="CHEBI:30616"/>
        <dbReference type="ChEBI" id="CHEBI:43474"/>
        <dbReference type="ChEBI" id="CHEBI:58359"/>
        <dbReference type="ChEBI" id="CHEBI:78515"/>
        <dbReference type="ChEBI" id="CHEBI:78516"/>
        <dbReference type="ChEBI" id="CHEBI:456216"/>
    </reaction>
</comment>
<comment type="subunit">
    <text evidence="1">Heterotrimer of A, B and C subunits.</text>
</comment>
<comment type="similarity">
    <text evidence="1">Belongs to the GatB/GatE family. GatB subfamily.</text>
</comment>
<proteinExistence type="inferred from homology"/>
<reference key="1">
    <citation type="journal article" date="2005" name="Science">
        <title>Genome sequence of the PCE-dechlorinating bacterium Dehalococcoides ethenogenes.</title>
        <authorList>
            <person name="Seshadri R."/>
            <person name="Adrian L."/>
            <person name="Fouts D.E."/>
            <person name="Eisen J.A."/>
            <person name="Phillippy A.M."/>
            <person name="Methe B.A."/>
            <person name="Ward N.L."/>
            <person name="Nelson W.C."/>
            <person name="DeBoy R.T."/>
            <person name="Khouri H.M."/>
            <person name="Kolonay J.F."/>
            <person name="Dodson R.J."/>
            <person name="Daugherty S.C."/>
            <person name="Brinkac L.M."/>
            <person name="Sullivan S.A."/>
            <person name="Madupu R."/>
            <person name="Nelson K.E."/>
            <person name="Kang K.H."/>
            <person name="Impraim M."/>
            <person name="Tran K."/>
            <person name="Robinson J.M."/>
            <person name="Forberger H.A."/>
            <person name="Fraser C.M."/>
            <person name="Zinder S.H."/>
            <person name="Heidelberg J.F."/>
        </authorList>
    </citation>
    <scope>NUCLEOTIDE SEQUENCE [LARGE SCALE GENOMIC DNA]</scope>
    <source>
        <strain>ATCC BAA-2266 / KCTC 15142 / 195</strain>
    </source>
</reference>
<feature type="chain" id="PRO_0000241214" description="Aspartyl/glutamyl-tRNA(Asn/Gln) amidotransferase subunit B">
    <location>
        <begin position="1"/>
        <end position="492"/>
    </location>
</feature>
<sequence length="492" mass="54963">MTQYETVIGLEVHVQLNTKSKMFCRCSTDYTSAEPNTHVCPVCLGMPGVLPTINKQAVEYTIMSGLALGCDIASFSKFDRKNYNYPDLMKGYQISQYDQPLCGKGFMDINIDGAIRRIGITRIHLEEDVAKLHHESDINGQPYSLLDINRSSIPLMEIVSEPDMRTPEEARQYLMKLRTIMRYLGVSTANMEDGSFRCDANISIRPEGSPELGAKVEVKNMNSFKAVFSALEYEEVRQRKMADEGKKISQETRGWQDDKCQTVSQRSKEFAHDYRYFPEPDLPPLHISCDWIEAIRAKLPELPEVRKERFIQGYWLSEYDASLLTASRELADYFEAVLSEADFQNIPQDKGIKEVANWVVGPVSSIMNTAGADINAFTLKVSPASLCRLLVLVSAGKVNAATAKAVLEDMYSTGQNAETIIEKKGLSQISDSSELVSIAKKVLADNPKAVAEYNEGKTQVIGFLVGQMMKQSKGRANPNIAMELLKKALEEG</sequence>
<accession>Q3Z6A1</accession>
<name>GATB_DEHM1</name>
<organism>
    <name type="scientific">Dehalococcoides mccartyi (strain ATCC BAA-2266 / KCTC 15142 / 195)</name>
    <name type="common">Dehalococcoides ethenogenes (strain 195)</name>
    <dbReference type="NCBI Taxonomy" id="243164"/>
    <lineage>
        <taxon>Bacteria</taxon>
        <taxon>Bacillati</taxon>
        <taxon>Chloroflexota</taxon>
        <taxon>Dehalococcoidia</taxon>
        <taxon>Dehalococcoidales</taxon>
        <taxon>Dehalococcoidaceae</taxon>
        <taxon>Dehalococcoides</taxon>
    </lineage>
</organism>
<gene>
    <name evidence="1" type="primary">gatB</name>
    <name type="ordered locus">DET1550</name>
</gene>
<dbReference type="EC" id="6.3.5.-" evidence="1"/>
<dbReference type="EMBL" id="CP000027">
    <property type="protein sequence ID" value="AAW39221.1"/>
    <property type="molecule type" value="Genomic_DNA"/>
</dbReference>
<dbReference type="RefSeq" id="WP_010937225.1">
    <property type="nucleotide sequence ID" value="NC_002936.3"/>
</dbReference>
<dbReference type="SMR" id="Q3Z6A1"/>
<dbReference type="FunCoup" id="Q3Z6A1">
    <property type="interactions" value="344"/>
</dbReference>
<dbReference type="STRING" id="243164.DET1550"/>
<dbReference type="GeneID" id="3229179"/>
<dbReference type="KEGG" id="det:DET1550"/>
<dbReference type="PATRIC" id="fig|243164.10.peg.1464"/>
<dbReference type="eggNOG" id="COG0064">
    <property type="taxonomic scope" value="Bacteria"/>
</dbReference>
<dbReference type="HOGENOM" id="CLU_019240_0_0_0"/>
<dbReference type="InParanoid" id="Q3Z6A1"/>
<dbReference type="Proteomes" id="UP000008289">
    <property type="component" value="Chromosome"/>
</dbReference>
<dbReference type="GO" id="GO:0050566">
    <property type="term" value="F:asparaginyl-tRNA synthase (glutamine-hydrolyzing) activity"/>
    <property type="evidence" value="ECO:0007669"/>
    <property type="project" value="RHEA"/>
</dbReference>
<dbReference type="GO" id="GO:0005524">
    <property type="term" value="F:ATP binding"/>
    <property type="evidence" value="ECO:0007669"/>
    <property type="project" value="UniProtKB-KW"/>
</dbReference>
<dbReference type="GO" id="GO:0050567">
    <property type="term" value="F:glutaminyl-tRNA synthase (glutamine-hydrolyzing) activity"/>
    <property type="evidence" value="ECO:0007669"/>
    <property type="project" value="UniProtKB-UniRule"/>
</dbReference>
<dbReference type="GO" id="GO:0070681">
    <property type="term" value="P:glutaminyl-tRNAGln biosynthesis via transamidation"/>
    <property type="evidence" value="ECO:0007669"/>
    <property type="project" value="TreeGrafter"/>
</dbReference>
<dbReference type="GO" id="GO:0006412">
    <property type="term" value="P:translation"/>
    <property type="evidence" value="ECO:0007669"/>
    <property type="project" value="UniProtKB-UniRule"/>
</dbReference>
<dbReference type="FunFam" id="1.10.10.410:FF:000001">
    <property type="entry name" value="Aspartyl/glutamyl-tRNA(Asn/Gln) amidotransferase subunit B"/>
    <property type="match status" value="1"/>
</dbReference>
<dbReference type="Gene3D" id="1.10.10.410">
    <property type="match status" value="1"/>
</dbReference>
<dbReference type="Gene3D" id="1.10.150.380">
    <property type="entry name" value="GatB domain, N-terminal subdomain"/>
    <property type="match status" value="1"/>
</dbReference>
<dbReference type="HAMAP" id="MF_00121">
    <property type="entry name" value="GatB"/>
    <property type="match status" value="1"/>
</dbReference>
<dbReference type="InterPro" id="IPR017959">
    <property type="entry name" value="Asn/Gln-tRNA_amidoTrfase_suB/E"/>
</dbReference>
<dbReference type="InterPro" id="IPR006075">
    <property type="entry name" value="Asn/Gln-tRNA_Trfase_suB/E_cat"/>
</dbReference>
<dbReference type="InterPro" id="IPR018027">
    <property type="entry name" value="Asn/Gln_amidotransferase"/>
</dbReference>
<dbReference type="InterPro" id="IPR003789">
    <property type="entry name" value="Asn/Gln_tRNA_amidoTrase-B-like"/>
</dbReference>
<dbReference type="InterPro" id="IPR004413">
    <property type="entry name" value="GatB"/>
</dbReference>
<dbReference type="InterPro" id="IPR042114">
    <property type="entry name" value="GatB_C_1"/>
</dbReference>
<dbReference type="InterPro" id="IPR023168">
    <property type="entry name" value="GatB_Yqey_C_2"/>
</dbReference>
<dbReference type="InterPro" id="IPR017958">
    <property type="entry name" value="Gln-tRNA_amidoTrfase_suB_CS"/>
</dbReference>
<dbReference type="InterPro" id="IPR014746">
    <property type="entry name" value="Gln_synth/guanido_kin_cat_dom"/>
</dbReference>
<dbReference type="NCBIfam" id="TIGR00133">
    <property type="entry name" value="gatB"/>
    <property type="match status" value="1"/>
</dbReference>
<dbReference type="NCBIfam" id="NF004012">
    <property type="entry name" value="PRK05477.1-2"/>
    <property type="match status" value="1"/>
</dbReference>
<dbReference type="NCBIfam" id="NF004014">
    <property type="entry name" value="PRK05477.1-4"/>
    <property type="match status" value="1"/>
</dbReference>
<dbReference type="PANTHER" id="PTHR11659">
    <property type="entry name" value="GLUTAMYL-TRNA GLN AMIDOTRANSFERASE SUBUNIT B MITOCHONDRIAL AND PROKARYOTIC PET112-RELATED"/>
    <property type="match status" value="1"/>
</dbReference>
<dbReference type="PANTHER" id="PTHR11659:SF0">
    <property type="entry name" value="GLUTAMYL-TRNA(GLN) AMIDOTRANSFERASE SUBUNIT B, MITOCHONDRIAL"/>
    <property type="match status" value="1"/>
</dbReference>
<dbReference type="Pfam" id="PF02934">
    <property type="entry name" value="GatB_N"/>
    <property type="match status" value="1"/>
</dbReference>
<dbReference type="Pfam" id="PF02637">
    <property type="entry name" value="GatB_Yqey"/>
    <property type="match status" value="1"/>
</dbReference>
<dbReference type="SMART" id="SM00845">
    <property type="entry name" value="GatB_Yqey"/>
    <property type="match status" value="1"/>
</dbReference>
<dbReference type="SUPFAM" id="SSF89095">
    <property type="entry name" value="GatB/YqeY motif"/>
    <property type="match status" value="1"/>
</dbReference>
<dbReference type="SUPFAM" id="SSF55931">
    <property type="entry name" value="Glutamine synthetase/guanido kinase"/>
    <property type="match status" value="1"/>
</dbReference>
<dbReference type="PROSITE" id="PS01234">
    <property type="entry name" value="GATB"/>
    <property type="match status" value="1"/>
</dbReference>